<accession>B7VLE6</accession>
<comment type="function">
    <text evidence="1">One of two assembly initiator proteins, it binds directly to the 5'-end of the 23S rRNA, where it nucleates assembly of the 50S subunit.</text>
</comment>
<comment type="function">
    <text evidence="1">One of the proteins that surrounds the polypeptide exit tunnel on the outside of the subunit.</text>
</comment>
<comment type="subunit">
    <text evidence="1">Part of the 50S ribosomal subunit.</text>
</comment>
<comment type="similarity">
    <text evidence="1">Belongs to the universal ribosomal protein uL24 family.</text>
</comment>
<name>RL24_VIBA3</name>
<evidence type="ECO:0000255" key="1">
    <source>
        <dbReference type="HAMAP-Rule" id="MF_01326"/>
    </source>
</evidence>
<evidence type="ECO:0000305" key="2"/>
<gene>
    <name evidence="1" type="primary">rplX</name>
    <name type="ordered locus">VS_2820</name>
</gene>
<feature type="chain" id="PRO_1000165974" description="Large ribosomal subunit protein uL24">
    <location>
        <begin position="1"/>
        <end position="105"/>
    </location>
</feature>
<organism>
    <name type="scientific">Vibrio atlanticus (strain LGP32)</name>
    <name type="common">Vibrio splendidus (strain Mel32)</name>
    <dbReference type="NCBI Taxonomy" id="575788"/>
    <lineage>
        <taxon>Bacteria</taxon>
        <taxon>Pseudomonadati</taxon>
        <taxon>Pseudomonadota</taxon>
        <taxon>Gammaproteobacteria</taxon>
        <taxon>Vibrionales</taxon>
        <taxon>Vibrionaceae</taxon>
        <taxon>Vibrio</taxon>
    </lineage>
</organism>
<dbReference type="EMBL" id="FM954972">
    <property type="protein sequence ID" value="CAV20112.1"/>
    <property type="molecule type" value="Genomic_DNA"/>
</dbReference>
<dbReference type="SMR" id="B7VLE6"/>
<dbReference type="STRING" id="575788.VS_2820"/>
<dbReference type="KEGG" id="vsp:VS_2820"/>
<dbReference type="eggNOG" id="COG0198">
    <property type="taxonomic scope" value="Bacteria"/>
</dbReference>
<dbReference type="HOGENOM" id="CLU_093315_2_2_6"/>
<dbReference type="Proteomes" id="UP000009100">
    <property type="component" value="Chromosome 1"/>
</dbReference>
<dbReference type="GO" id="GO:1990904">
    <property type="term" value="C:ribonucleoprotein complex"/>
    <property type="evidence" value="ECO:0007669"/>
    <property type="project" value="UniProtKB-KW"/>
</dbReference>
<dbReference type="GO" id="GO:0005840">
    <property type="term" value="C:ribosome"/>
    <property type="evidence" value="ECO:0007669"/>
    <property type="project" value="UniProtKB-KW"/>
</dbReference>
<dbReference type="GO" id="GO:0019843">
    <property type="term" value="F:rRNA binding"/>
    <property type="evidence" value="ECO:0007669"/>
    <property type="project" value="UniProtKB-UniRule"/>
</dbReference>
<dbReference type="GO" id="GO:0003735">
    <property type="term" value="F:structural constituent of ribosome"/>
    <property type="evidence" value="ECO:0007669"/>
    <property type="project" value="InterPro"/>
</dbReference>
<dbReference type="GO" id="GO:0006412">
    <property type="term" value="P:translation"/>
    <property type="evidence" value="ECO:0007669"/>
    <property type="project" value="UniProtKB-UniRule"/>
</dbReference>
<dbReference type="CDD" id="cd06089">
    <property type="entry name" value="KOW_RPL26"/>
    <property type="match status" value="1"/>
</dbReference>
<dbReference type="FunFam" id="2.30.30.30:FF:000004">
    <property type="entry name" value="50S ribosomal protein L24"/>
    <property type="match status" value="1"/>
</dbReference>
<dbReference type="Gene3D" id="2.30.30.30">
    <property type="match status" value="1"/>
</dbReference>
<dbReference type="HAMAP" id="MF_01326_B">
    <property type="entry name" value="Ribosomal_uL24_B"/>
    <property type="match status" value="1"/>
</dbReference>
<dbReference type="InterPro" id="IPR005824">
    <property type="entry name" value="KOW"/>
</dbReference>
<dbReference type="InterPro" id="IPR014722">
    <property type="entry name" value="Rib_uL2_dom2"/>
</dbReference>
<dbReference type="InterPro" id="IPR003256">
    <property type="entry name" value="Ribosomal_uL24"/>
</dbReference>
<dbReference type="InterPro" id="IPR005825">
    <property type="entry name" value="Ribosomal_uL24_CS"/>
</dbReference>
<dbReference type="InterPro" id="IPR041988">
    <property type="entry name" value="Ribosomal_uL24_KOW"/>
</dbReference>
<dbReference type="InterPro" id="IPR008991">
    <property type="entry name" value="Translation_prot_SH3-like_sf"/>
</dbReference>
<dbReference type="NCBIfam" id="TIGR01079">
    <property type="entry name" value="rplX_bact"/>
    <property type="match status" value="1"/>
</dbReference>
<dbReference type="PANTHER" id="PTHR12903">
    <property type="entry name" value="MITOCHONDRIAL RIBOSOMAL PROTEIN L24"/>
    <property type="match status" value="1"/>
</dbReference>
<dbReference type="Pfam" id="PF00467">
    <property type="entry name" value="KOW"/>
    <property type="match status" value="1"/>
</dbReference>
<dbReference type="Pfam" id="PF17136">
    <property type="entry name" value="ribosomal_L24"/>
    <property type="match status" value="1"/>
</dbReference>
<dbReference type="SMART" id="SM00739">
    <property type="entry name" value="KOW"/>
    <property type="match status" value="1"/>
</dbReference>
<dbReference type="SUPFAM" id="SSF50104">
    <property type="entry name" value="Translation proteins SH3-like domain"/>
    <property type="match status" value="1"/>
</dbReference>
<dbReference type="PROSITE" id="PS01108">
    <property type="entry name" value="RIBOSOMAL_L24"/>
    <property type="match status" value="1"/>
</dbReference>
<proteinExistence type="inferred from homology"/>
<reference key="1">
    <citation type="submission" date="2009-02" db="EMBL/GenBank/DDBJ databases">
        <title>Vibrio splendidus str. LGP32 complete genome.</title>
        <authorList>
            <person name="Mazel D."/>
            <person name="Le Roux F."/>
        </authorList>
    </citation>
    <scope>NUCLEOTIDE SEQUENCE [LARGE SCALE GENOMIC DNA]</scope>
    <source>
        <strain>LGP32</strain>
    </source>
</reference>
<sequence length="105" mass="11200">MAAKIRRNDEVIILAGKDKGKKGKVTKVLTTGKVVVEGINLVKKHQKPVPALGQQGGIVEQEAAIDASNVAVFNAATGKADRIGFRIEDGKKVRFFKSNGETVSN</sequence>
<protein>
    <recommendedName>
        <fullName evidence="1">Large ribosomal subunit protein uL24</fullName>
    </recommendedName>
    <alternativeName>
        <fullName evidence="2">50S ribosomal protein L24</fullName>
    </alternativeName>
</protein>
<keyword id="KW-0687">Ribonucleoprotein</keyword>
<keyword id="KW-0689">Ribosomal protein</keyword>
<keyword id="KW-0694">RNA-binding</keyword>
<keyword id="KW-0699">rRNA-binding</keyword>